<organism>
    <name type="scientific">Propioniciclava tarda</name>
    <dbReference type="NCBI Taxonomy" id="433330"/>
    <lineage>
        <taxon>Bacteria</taxon>
        <taxon>Bacillati</taxon>
        <taxon>Actinomycetota</taxon>
        <taxon>Actinomycetes</taxon>
        <taxon>Propionibacteriales</taxon>
        <taxon>Propionibacteriaceae</taxon>
        <taxon>Propioniciclava</taxon>
    </lineage>
</organism>
<feature type="chain" id="PRO_0000455236" description="Pycsar effector protein PtPycTM">
    <location>
        <begin position="1"/>
        <end position="202"/>
    </location>
</feature>
<feature type="transmembrane region" description="Helical" evidence="1">
    <location>
        <begin position="60"/>
        <end position="80"/>
    </location>
</feature>
<feature type="transmembrane region" description="Helical" evidence="1">
    <location>
        <begin position="85"/>
        <end position="105"/>
    </location>
</feature>
<feature type="transmembrane region" description="Helical" evidence="1">
    <location>
        <begin position="181"/>
        <end position="201"/>
    </location>
</feature>
<proteinExistence type="inferred from homology"/>
<protein>
    <recommendedName>
        <fullName>Pycsar effector protein PtPycTM</fullName>
        <shortName evidence="2">PtPycTM</shortName>
    </recommendedName>
</protein>
<dbReference type="EMBL" id="SDMR01000001">
    <property type="protein sequence ID" value="TBT96320.1"/>
    <property type="molecule type" value="Genomic_DNA"/>
</dbReference>
<dbReference type="RefSeq" id="WP_131170732.1">
    <property type="nucleotide sequence ID" value="NZ_FXTL01000001.1"/>
</dbReference>
<dbReference type="SMR" id="A0A4Q9KQH5"/>
<dbReference type="OrthoDB" id="4550756at2"/>
<dbReference type="Proteomes" id="UP000291933">
    <property type="component" value="Unassembled WGS sequence"/>
</dbReference>
<dbReference type="GO" id="GO:0005886">
    <property type="term" value="C:plasma membrane"/>
    <property type="evidence" value="ECO:0007669"/>
    <property type="project" value="UniProtKB-SubCell"/>
</dbReference>
<dbReference type="GO" id="GO:0000166">
    <property type="term" value="F:nucleotide binding"/>
    <property type="evidence" value="ECO:0007669"/>
    <property type="project" value="UniProtKB-KW"/>
</dbReference>
<dbReference type="GO" id="GO:0051607">
    <property type="term" value="P:defense response to virus"/>
    <property type="evidence" value="ECO:0007669"/>
    <property type="project" value="UniProtKB-KW"/>
</dbReference>
<dbReference type="InterPro" id="IPR043760">
    <property type="entry name" value="PycTM"/>
</dbReference>
<dbReference type="Pfam" id="PF18967">
    <property type="entry name" value="PycTM"/>
    <property type="match status" value="1"/>
</dbReference>
<comment type="function">
    <text evidence="5">Pycsar (pyrimidine cyclase system for antiphage resistance) provides immunity against bacteriophage. The pyrimidine cyclase (PycC) synthesizes cyclic nucleotides in response to infection; these serve as specific second messenger signals. The signals activate the adjacent effector, leading to bacterial cell death and abortive phage infection. A clade D Pycsar system.</text>
</comment>
<comment type="function">
    <text evidence="5">The effector gene of a two-gene Pycsar system. Expression of this and adjacent uridylate cyclase PtPycC (AC A0A4V2JTK3) probably confers resistance to bacteriophage. The genes are probably only expressed in response to bacteriophage infection. Probably only responds to cUMP (produced by its cognate NTP cyclase), acts by impairing membrane integrity.</text>
</comment>
<comment type="subcellular location">
    <subcellularLocation>
        <location evidence="4">Cell membrane</location>
        <topology evidence="1">Multi-pass membrane protein</topology>
    </subcellularLocation>
</comment>
<evidence type="ECO:0000255" key="1"/>
<evidence type="ECO:0000303" key="2">
    <source>
    </source>
</evidence>
<evidence type="ECO:0000303" key="3">
    <source ref="1"/>
</evidence>
<evidence type="ECO:0000305" key="4"/>
<evidence type="ECO:0000305" key="5">
    <source>
    </source>
</evidence>
<accession>A0A4Q9KQH5</accession>
<reference key="1">
    <citation type="submission" date="2019-01" db="EMBL/GenBank/DDBJ databases">
        <title>Lactibacter flavus gen. nov., sp. nov., a novel bacterium of the family Propionibacteriaceae isolated from raw milk and dairy products.</title>
        <authorList>
            <person name="Huptas C."/>
            <person name="Wenning M."/>
            <person name="Breitenwieser F."/>
            <person name="Doll E."/>
            <person name="Von Neubeck M."/>
            <person name="Busse H.-J."/>
            <person name="Scherer S."/>
        </authorList>
    </citation>
    <scope>NUCLEOTIDE SEQUENCE [LARGE SCALE GENOMIC DNA]</scope>
    <source>
        <strain>DSM 22130 / JCM 15804 / WR061</strain>
    </source>
</reference>
<reference key="2">
    <citation type="journal article" date="2021" name="Cell">
        <title>Cyclic CMP and cyclic UMP mediate bacterial immunity against phages.</title>
        <authorList>
            <person name="Tal N."/>
            <person name="Morehouse B.R."/>
            <person name="Millman A."/>
            <person name="Stokar-Avihail A."/>
            <person name="Avraham C."/>
            <person name="Fedorenko T."/>
            <person name="Yirmiya E."/>
            <person name="Herbst E."/>
            <person name="Brandis A."/>
            <person name="Mehlman T."/>
            <person name="Oppenheimer-Shaanan Y."/>
            <person name="Keszei A.F.A."/>
            <person name="Shao S."/>
            <person name="Amitai G."/>
            <person name="Kranzusch P.J."/>
            <person name="Sorek R."/>
        </authorList>
    </citation>
    <scope>PROBABLE FUNCTION</scope>
    <scope>CLASSIFICATION</scope>
    <source>
        <strain>DSM 22130 / JCM 15804 / WR061</strain>
    </source>
</reference>
<gene>
    <name evidence="2" type="primary">pycTM</name>
    <name evidence="3" type="ORF">ET996_01255</name>
</gene>
<sequence>MSTLLGWLGRLWFGSLGTARPDPSTAVAAAGSTDVTSTQDAWAVLSLVNEWVKHSEAKLGVVLAFVGVMAAGLITIAADIPCPSLVILCIEGAAAVLILASAVLASLGLLPRFKGQSEEAQMNPLFYGDVANHFKGKSEEYVTALSGVIGSQDALIRQIARQVHANADVASRKYLWANRSILVGMLGLVCLFVLAAGVALGW</sequence>
<keyword id="KW-0051">Antiviral defense</keyword>
<keyword id="KW-1003">Cell membrane</keyword>
<keyword id="KW-0472">Membrane</keyword>
<keyword id="KW-0547">Nucleotide-binding</keyword>
<keyword id="KW-1185">Reference proteome</keyword>
<keyword id="KW-0812">Transmembrane</keyword>
<keyword id="KW-1133">Transmembrane helix</keyword>
<name>PCTM_PROTD</name>